<protein>
    <recommendedName>
        <fullName evidence="1">ATP-dependent Clp protease ATP-binding subunit ClpX</fullName>
    </recommendedName>
</protein>
<reference key="1">
    <citation type="journal article" date="2004" name="Proc. Natl. Acad. Sci. U.S.A.">
        <title>Genome sequence of the deep-sea gamma-proteobacterium Idiomarina loihiensis reveals amino acid fermentation as a source of carbon and energy.</title>
        <authorList>
            <person name="Hou S."/>
            <person name="Saw J.H."/>
            <person name="Lee K.S."/>
            <person name="Freitas T.A."/>
            <person name="Belisle C."/>
            <person name="Kawarabayasi Y."/>
            <person name="Donachie S.P."/>
            <person name="Pikina A."/>
            <person name="Galperin M.Y."/>
            <person name="Koonin E.V."/>
            <person name="Makarova K.S."/>
            <person name="Omelchenko M.V."/>
            <person name="Sorokin A."/>
            <person name="Wolf Y.I."/>
            <person name="Li Q.X."/>
            <person name="Keum Y.S."/>
            <person name="Campbell S."/>
            <person name="Denery J."/>
            <person name="Aizawa S."/>
            <person name="Shibata S."/>
            <person name="Malahoff A."/>
            <person name="Alam M."/>
        </authorList>
    </citation>
    <scope>NUCLEOTIDE SEQUENCE [LARGE SCALE GENOMIC DNA]</scope>
    <source>
        <strain>ATCC BAA-735 / DSM 15497 / L2-TR</strain>
    </source>
</reference>
<name>CLPX_IDILO</name>
<organism>
    <name type="scientific">Idiomarina loihiensis (strain ATCC BAA-735 / DSM 15497 / L2-TR)</name>
    <dbReference type="NCBI Taxonomy" id="283942"/>
    <lineage>
        <taxon>Bacteria</taxon>
        <taxon>Pseudomonadati</taxon>
        <taxon>Pseudomonadota</taxon>
        <taxon>Gammaproteobacteria</taxon>
        <taxon>Alteromonadales</taxon>
        <taxon>Idiomarinaceae</taxon>
        <taxon>Idiomarina</taxon>
    </lineage>
</organism>
<sequence length="423" mass="46393">MTDQSKGDGDKPLYCTFCGKSQHEVKKLIAGPSVFICDECVELCNDILKEEIHQLSPVPDQDELPVPKAIRKHLDDYVIGQDRAKKVLSVAVYNHYKRLRGSAKQEVELGKSNILLIGPTGSGKTFLAETLARYLDVPFTMADATTLTEAGYVGEDVENIIQKLLQKCDYDVEKAERGIVYIDEIDKISRKSDNPSITRDVSGEGVQQALLKLIEGTVASVPPQGGRKHPQQEFLQVDTSKILFICGGAFAGLNKVIEQRLSTGTGIGFGAEVKSKTQSEEGAIIAKVEPEDLVRYGLIPEFIGRLPVVATLDELDEEALIEILREPKNALTKQYSALFEMEDVELEFREDALRAIAKKAMARKTGARGLRSIVEGVLLGTMYELPSIEGVAKVVVDESVIAGESDPILIYANQQKNKQASGE</sequence>
<keyword id="KW-0067">ATP-binding</keyword>
<keyword id="KW-0143">Chaperone</keyword>
<keyword id="KW-0479">Metal-binding</keyword>
<keyword id="KW-0547">Nucleotide-binding</keyword>
<keyword id="KW-1185">Reference proteome</keyword>
<keyword id="KW-0862">Zinc</keyword>
<evidence type="ECO:0000255" key="1">
    <source>
        <dbReference type="HAMAP-Rule" id="MF_00175"/>
    </source>
</evidence>
<evidence type="ECO:0000255" key="2">
    <source>
        <dbReference type="PROSITE-ProRule" id="PRU01250"/>
    </source>
</evidence>
<dbReference type="EMBL" id="AE017340">
    <property type="protein sequence ID" value="AAV81844.1"/>
    <property type="molecule type" value="Genomic_DNA"/>
</dbReference>
<dbReference type="RefSeq" id="WP_011234255.1">
    <property type="nucleotide sequence ID" value="NC_006512.1"/>
</dbReference>
<dbReference type="SMR" id="Q5QXN9"/>
<dbReference type="STRING" id="283942.IL1004"/>
<dbReference type="GeneID" id="41336166"/>
<dbReference type="KEGG" id="ilo:IL1004"/>
<dbReference type="eggNOG" id="COG1219">
    <property type="taxonomic scope" value="Bacteria"/>
</dbReference>
<dbReference type="HOGENOM" id="CLU_014218_8_2_6"/>
<dbReference type="OrthoDB" id="9804062at2"/>
<dbReference type="Proteomes" id="UP000001171">
    <property type="component" value="Chromosome"/>
</dbReference>
<dbReference type="GO" id="GO:0009376">
    <property type="term" value="C:HslUV protease complex"/>
    <property type="evidence" value="ECO:0007669"/>
    <property type="project" value="TreeGrafter"/>
</dbReference>
<dbReference type="GO" id="GO:0005524">
    <property type="term" value="F:ATP binding"/>
    <property type="evidence" value="ECO:0007669"/>
    <property type="project" value="UniProtKB-UniRule"/>
</dbReference>
<dbReference type="GO" id="GO:0016887">
    <property type="term" value="F:ATP hydrolysis activity"/>
    <property type="evidence" value="ECO:0007669"/>
    <property type="project" value="InterPro"/>
</dbReference>
<dbReference type="GO" id="GO:0140662">
    <property type="term" value="F:ATP-dependent protein folding chaperone"/>
    <property type="evidence" value="ECO:0007669"/>
    <property type="project" value="InterPro"/>
</dbReference>
<dbReference type="GO" id="GO:0046983">
    <property type="term" value="F:protein dimerization activity"/>
    <property type="evidence" value="ECO:0007669"/>
    <property type="project" value="InterPro"/>
</dbReference>
<dbReference type="GO" id="GO:0051082">
    <property type="term" value="F:unfolded protein binding"/>
    <property type="evidence" value="ECO:0007669"/>
    <property type="project" value="UniProtKB-UniRule"/>
</dbReference>
<dbReference type="GO" id="GO:0008270">
    <property type="term" value="F:zinc ion binding"/>
    <property type="evidence" value="ECO:0007669"/>
    <property type="project" value="InterPro"/>
</dbReference>
<dbReference type="GO" id="GO:0051301">
    <property type="term" value="P:cell division"/>
    <property type="evidence" value="ECO:0007669"/>
    <property type="project" value="TreeGrafter"/>
</dbReference>
<dbReference type="GO" id="GO:0051603">
    <property type="term" value="P:proteolysis involved in protein catabolic process"/>
    <property type="evidence" value="ECO:0007669"/>
    <property type="project" value="TreeGrafter"/>
</dbReference>
<dbReference type="CDD" id="cd19497">
    <property type="entry name" value="RecA-like_ClpX"/>
    <property type="match status" value="1"/>
</dbReference>
<dbReference type="FunFam" id="1.10.8.60:FF:000002">
    <property type="entry name" value="ATP-dependent Clp protease ATP-binding subunit ClpX"/>
    <property type="match status" value="1"/>
</dbReference>
<dbReference type="FunFam" id="3.40.50.300:FF:000005">
    <property type="entry name" value="ATP-dependent Clp protease ATP-binding subunit ClpX"/>
    <property type="match status" value="1"/>
</dbReference>
<dbReference type="Gene3D" id="1.10.8.60">
    <property type="match status" value="1"/>
</dbReference>
<dbReference type="Gene3D" id="6.20.220.10">
    <property type="entry name" value="ClpX chaperone, C4-type zinc finger domain"/>
    <property type="match status" value="1"/>
</dbReference>
<dbReference type="Gene3D" id="3.40.50.300">
    <property type="entry name" value="P-loop containing nucleotide triphosphate hydrolases"/>
    <property type="match status" value="1"/>
</dbReference>
<dbReference type="HAMAP" id="MF_00175">
    <property type="entry name" value="ClpX"/>
    <property type="match status" value="1"/>
</dbReference>
<dbReference type="InterPro" id="IPR003593">
    <property type="entry name" value="AAA+_ATPase"/>
</dbReference>
<dbReference type="InterPro" id="IPR050052">
    <property type="entry name" value="ATP-dep_Clp_protease_ClpX"/>
</dbReference>
<dbReference type="InterPro" id="IPR003959">
    <property type="entry name" value="ATPase_AAA_core"/>
</dbReference>
<dbReference type="InterPro" id="IPR019489">
    <property type="entry name" value="Clp_ATPase_C"/>
</dbReference>
<dbReference type="InterPro" id="IPR004487">
    <property type="entry name" value="Clp_protease_ATP-bd_su_ClpX"/>
</dbReference>
<dbReference type="InterPro" id="IPR046425">
    <property type="entry name" value="ClpX_bact"/>
</dbReference>
<dbReference type="InterPro" id="IPR027417">
    <property type="entry name" value="P-loop_NTPase"/>
</dbReference>
<dbReference type="InterPro" id="IPR010603">
    <property type="entry name" value="Znf_CppX_C4"/>
</dbReference>
<dbReference type="InterPro" id="IPR038366">
    <property type="entry name" value="Znf_CppX_C4_sf"/>
</dbReference>
<dbReference type="NCBIfam" id="TIGR00382">
    <property type="entry name" value="clpX"/>
    <property type="match status" value="1"/>
</dbReference>
<dbReference type="NCBIfam" id="NF003745">
    <property type="entry name" value="PRK05342.1"/>
    <property type="match status" value="1"/>
</dbReference>
<dbReference type="PANTHER" id="PTHR48102:SF7">
    <property type="entry name" value="ATP-DEPENDENT CLP PROTEASE ATP-BINDING SUBUNIT CLPX-LIKE, MITOCHONDRIAL"/>
    <property type="match status" value="1"/>
</dbReference>
<dbReference type="PANTHER" id="PTHR48102">
    <property type="entry name" value="ATP-DEPENDENT CLP PROTEASE ATP-BINDING SUBUNIT CLPX-LIKE, MITOCHONDRIAL-RELATED"/>
    <property type="match status" value="1"/>
</dbReference>
<dbReference type="Pfam" id="PF07724">
    <property type="entry name" value="AAA_2"/>
    <property type="match status" value="1"/>
</dbReference>
<dbReference type="Pfam" id="PF10431">
    <property type="entry name" value="ClpB_D2-small"/>
    <property type="match status" value="1"/>
</dbReference>
<dbReference type="Pfam" id="PF06689">
    <property type="entry name" value="zf-C4_ClpX"/>
    <property type="match status" value="1"/>
</dbReference>
<dbReference type="SMART" id="SM00382">
    <property type="entry name" value="AAA"/>
    <property type="match status" value="1"/>
</dbReference>
<dbReference type="SMART" id="SM01086">
    <property type="entry name" value="ClpB_D2-small"/>
    <property type="match status" value="1"/>
</dbReference>
<dbReference type="SMART" id="SM00994">
    <property type="entry name" value="zf-C4_ClpX"/>
    <property type="match status" value="1"/>
</dbReference>
<dbReference type="SUPFAM" id="SSF57716">
    <property type="entry name" value="Glucocorticoid receptor-like (DNA-binding domain)"/>
    <property type="match status" value="1"/>
</dbReference>
<dbReference type="SUPFAM" id="SSF52540">
    <property type="entry name" value="P-loop containing nucleoside triphosphate hydrolases"/>
    <property type="match status" value="1"/>
</dbReference>
<dbReference type="PROSITE" id="PS51902">
    <property type="entry name" value="CLPX_ZB"/>
    <property type="match status" value="1"/>
</dbReference>
<proteinExistence type="inferred from homology"/>
<comment type="function">
    <text evidence="1">ATP-dependent specificity component of the Clp protease. It directs the protease to specific substrates. Can perform chaperone functions in the absence of ClpP.</text>
</comment>
<comment type="subunit">
    <text evidence="1">Component of the ClpX-ClpP complex. Forms a hexameric ring that, in the presence of ATP, binds to fourteen ClpP subunits assembled into a disk-like structure with a central cavity, resembling the structure of eukaryotic proteasomes.</text>
</comment>
<comment type="similarity">
    <text evidence="1">Belongs to the ClpX chaperone family.</text>
</comment>
<accession>Q5QXN9</accession>
<feature type="chain" id="PRO_0000160367" description="ATP-dependent Clp protease ATP-binding subunit ClpX">
    <location>
        <begin position="1"/>
        <end position="423"/>
    </location>
</feature>
<feature type="domain" description="ClpX-type ZB" evidence="2">
    <location>
        <begin position="3"/>
        <end position="56"/>
    </location>
</feature>
<feature type="binding site" evidence="2">
    <location>
        <position position="15"/>
    </location>
    <ligand>
        <name>Zn(2+)</name>
        <dbReference type="ChEBI" id="CHEBI:29105"/>
    </ligand>
</feature>
<feature type="binding site" evidence="2">
    <location>
        <position position="18"/>
    </location>
    <ligand>
        <name>Zn(2+)</name>
        <dbReference type="ChEBI" id="CHEBI:29105"/>
    </ligand>
</feature>
<feature type="binding site" evidence="2">
    <location>
        <position position="37"/>
    </location>
    <ligand>
        <name>Zn(2+)</name>
        <dbReference type="ChEBI" id="CHEBI:29105"/>
    </ligand>
</feature>
<feature type="binding site" evidence="2">
    <location>
        <position position="40"/>
    </location>
    <ligand>
        <name>Zn(2+)</name>
        <dbReference type="ChEBI" id="CHEBI:29105"/>
    </ligand>
</feature>
<feature type="binding site" evidence="1">
    <location>
        <begin position="119"/>
        <end position="126"/>
    </location>
    <ligand>
        <name>ATP</name>
        <dbReference type="ChEBI" id="CHEBI:30616"/>
    </ligand>
</feature>
<gene>
    <name evidence="1" type="primary">clpX</name>
    <name type="ordered locus">IL1004</name>
</gene>